<protein>
    <recommendedName>
        <fullName>Glutathione S-transferase Mu 5</fullName>
        <ecNumber>2.5.1.18</ecNumber>
    </recommendedName>
    <alternativeName>
        <fullName>GST class-mu 5</fullName>
    </alternativeName>
</protein>
<gene>
    <name type="primary">Gstm5</name>
</gene>
<keyword id="KW-0963">Cytoplasm</keyword>
<keyword id="KW-0903">Direct protein sequencing</keyword>
<keyword id="KW-0597">Phosphoprotein</keyword>
<keyword id="KW-1185">Reference proteome</keyword>
<keyword id="KW-0808">Transferase</keyword>
<sequence>MSCSKSMVLGYWDIRGLAHAIRMLLEFTDTSYEEKQYTCGEAPDYDRSQWLDVKFKLDLDFPNLPYLMDGKNKITQSNAILRYIARKHNMCGDTEEEKIRVDIMENQIMDFRMQLVRLCYNSNHESLKPQYLEQLPAQLKQFSLFLGKFTWFAGEKLTFVDFLTYDVLDQNRMFEPKCLDEFPNLKAFMCRFEALEKIAAFLQSDRCFKMPINNKMAKWGNKSIC</sequence>
<organism>
    <name type="scientific">Rattus norvegicus</name>
    <name type="common">Rat</name>
    <dbReference type="NCBI Taxonomy" id="10116"/>
    <lineage>
        <taxon>Eukaryota</taxon>
        <taxon>Metazoa</taxon>
        <taxon>Chordata</taxon>
        <taxon>Craniata</taxon>
        <taxon>Vertebrata</taxon>
        <taxon>Euteleostomi</taxon>
        <taxon>Mammalia</taxon>
        <taxon>Eutheria</taxon>
        <taxon>Euarchontoglires</taxon>
        <taxon>Glires</taxon>
        <taxon>Rodentia</taxon>
        <taxon>Myomorpha</taxon>
        <taxon>Muroidea</taxon>
        <taxon>Muridae</taxon>
        <taxon>Murinae</taxon>
        <taxon>Rattus</taxon>
    </lineage>
</organism>
<evidence type="ECO:0000250" key="1"/>
<evidence type="ECO:0000250" key="2">
    <source>
        <dbReference type="UniProtKB" id="P08515"/>
    </source>
</evidence>
<evidence type="ECO:0000269" key="3">
    <source>
    </source>
</evidence>
<evidence type="ECO:0000305" key="4"/>
<evidence type="ECO:0007744" key="5">
    <source>
    </source>
</evidence>
<name>GSTM5_RAT</name>
<dbReference type="EC" id="2.5.1.18"/>
<dbReference type="EMBL" id="U86635">
    <property type="protein sequence ID" value="AAD00603.1"/>
    <property type="molecule type" value="mRNA"/>
</dbReference>
<dbReference type="RefSeq" id="NP_742035.1">
    <property type="nucleotide sequence ID" value="NM_172038.2"/>
</dbReference>
<dbReference type="RefSeq" id="XP_017446822.1">
    <property type="nucleotide sequence ID" value="XM_017591333.1"/>
</dbReference>
<dbReference type="RefSeq" id="XP_017452258.1">
    <property type="nucleotide sequence ID" value="XM_017596769.1"/>
</dbReference>
<dbReference type="SMR" id="Q9Z1B2"/>
<dbReference type="BioGRID" id="249037">
    <property type="interactions" value="1"/>
</dbReference>
<dbReference type="FunCoup" id="Q9Z1B2">
    <property type="interactions" value="480"/>
</dbReference>
<dbReference type="STRING" id="10116.ENSRNOP00000065389"/>
<dbReference type="iPTMnet" id="Q9Z1B2"/>
<dbReference type="PhosphoSitePlus" id="Q9Z1B2"/>
<dbReference type="SwissPalm" id="Q9Z1B2"/>
<dbReference type="jPOST" id="Q9Z1B2"/>
<dbReference type="PaxDb" id="10116-ENSRNOP00000064813"/>
<dbReference type="Ensembl" id="ENSRNOT00000072342.3">
    <property type="protein sequence ID" value="ENSRNOP00000065389.1"/>
    <property type="gene ID" value="ENSRNOG00000049743.3"/>
</dbReference>
<dbReference type="GeneID" id="64352"/>
<dbReference type="KEGG" id="rno:64352"/>
<dbReference type="UCSC" id="RGD:61964">
    <property type="organism name" value="rat"/>
</dbReference>
<dbReference type="AGR" id="RGD:61964"/>
<dbReference type="CTD" id="2949"/>
<dbReference type="RGD" id="61964">
    <property type="gene designation" value="Gstm5"/>
</dbReference>
<dbReference type="eggNOG" id="KOG1695">
    <property type="taxonomic scope" value="Eukaryota"/>
</dbReference>
<dbReference type="GeneTree" id="ENSGT00940000157663"/>
<dbReference type="HOGENOM" id="CLU_039475_2_0_1"/>
<dbReference type="InParanoid" id="Q9Z1B2"/>
<dbReference type="OMA" id="LCYTDFE"/>
<dbReference type="OrthoDB" id="4951845at2759"/>
<dbReference type="PhylomeDB" id="Q9Z1B2"/>
<dbReference type="TreeFam" id="TF353040"/>
<dbReference type="Reactome" id="R-RNO-156590">
    <property type="pathway name" value="Glutathione conjugation"/>
</dbReference>
<dbReference type="SABIO-RK" id="Q9Z1B2"/>
<dbReference type="PRO" id="PR:Q9Z1B2"/>
<dbReference type="Proteomes" id="UP000002494">
    <property type="component" value="Chromosome 2"/>
</dbReference>
<dbReference type="Bgee" id="ENSRNOG00000049743">
    <property type="expression patterns" value="Expressed in testis and 19 other cell types or tissues"/>
</dbReference>
<dbReference type="GO" id="GO:0005737">
    <property type="term" value="C:cytoplasm"/>
    <property type="evidence" value="ECO:0000266"/>
    <property type="project" value="RGD"/>
</dbReference>
<dbReference type="GO" id="GO:0005829">
    <property type="term" value="C:cytosol"/>
    <property type="evidence" value="ECO:0000266"/>
    <property type="project" value="RGD"/>
</dbReference>
<dbReference type="GO" id="GO:0035686">
    <property type="term" value="C:sperm fibrous sheath"/>
    <property type="evidence" value="ECO:0000266"/>
    <property type="project" value="RGD"/>
</dbReference>
<dbReference type="GO" id="GO:0019899">
    <property type="term" value="F:enzyme binding"/>
    <property type="evidence" value="ECO:0000266"/>
    <property type="project" value="RGD"/>
</dbReference>
<dbReference type="GO" id="GO:0043295">
    <property type="term" value="F:glutathione binding"/>
    <property type="evidence" value="ECO:0000266"/>
    <property type="project" value="RGD"/>
</dbReference>
<dbReference type="GO" id="GO:0004364">
    <property type="term" value="F:glutathione transferase activity"/>
    <property type="evidence" value="ECO:0000314"/>
    <property type="project" value="MGI"/>
</dbReference>
<dbReference type="GO" id="GO:0042802">
    <property type="term" value="F:identical protein binding"/>
    <property type="evidence" value="ECO:0000314"/>
    <property type="project" value="MGI"/>
</dbReference>
<dbReference type="GO" id="GO:0042803">
    <property type="term" value="F:protein homodimerization activity"/>
    <property type="evidence" value="ECO:0000266"/>
    <property type="project" value="RGD"/>
</dbReference>
<dbReference type="GO" id="GO:0070458">
    <property type="term" value="P:cellular detoxification of nitrogen compound"/>
    <property type="evidence" value="ECO:0000266"/>
    <property type="project" value="RGD"/>
</dbReference>
<dbReference type="GO" id="GO:0006749">
    <property type="term" value="P:glutathione metabolic process"/>
    <property type="evidence" value="ECO:0000250"/>
    <property type="project" value="UniProtKB"/>
</dbReference>
<dbReference type="GO" id="GO:0018916">
    <property type="term" value="P:nitrobenzene metabolic process"/>
    <property type="evidence" value="ECO:0000266"/>
    <property type="project" value="RGD"/>
</dbReference>
<dbReference type="GO" id="GO:0043627">
    <property type="term" value="P:response to estrogen"/>
    <property type="evidence" value="ECO:0000266"/>
    <property type="project" value="RGD"/>
</dbReference>
<dbReference type="GO" id="GO:0042178">
    <property type="term" value="P:xenobiotic catabolic process"/>
    <property type="evidence" value="ECO:0000266"/>
    <property type="project" value="RGD"/>
</dbReference>
<dbReference type="CDD" id="cd03209">
    <property type="entry name" value="GST_C_Mu"/>
    <property type="match status" value="1"/>
</dbReference>
<dbReference type="CDD" id="cd03075">
    <property type="entry name" value="GST_N_Mu"/>
    <property type="match status" value="1"/>
</dbReference>
<dbReference type="FunFam" id="1.20.1050.10:FF:000003">
    <property type="entry name" value="Glutathione S-transferase 2"/>
    <property type="match status" value="1"/>
</dbReference>
<dbReference type="FunFam" id="3.40.30.10:FF:000603">
    <property type="entry name" value="Glutathione S-transferase Mu 1"/>
    <property type="match status" value="1"/>
</dbReference>
<dbReference type="Gene3D" id="1.20.1050.10">
    <property type="match status" value="1"/>
</dbReference>
<dbReference type="Gene3D" id="3.40.30.10">
    <property type="entry name" value="Glutaredoxin"/>
    <property type="match status" value="1"/>
</dbReference>
<dbReference type="InterPro" id="IPR010987">
    <property type="entry name" value="Glutathione-S-Trfase_C-like"/>
</dbReference>
<dbReference type="InterPro" id="IPR036282">
    <property type="entry name" value="Glutathione-S-Trfase_C_sf"/>
</dbReference>
<dbReference type="InterPro" id="IPR040079">
    <property type="entry name" value="Glutathione_S-Trfase"/>
</dbReference>
<dbReference type="InterPro" id="IPR004045">
    <property type="entry name" value="Glutathione_S-Trfase_N"/>
</dbReference>
<dbReference type="InterPro" id="IPR004046">
    <property type="entry name" value="GST_C"/>
</dbReference>
<dbReference type="InterPro" id="IPR003081">
    <property type="entry name" value="GST_mu"/>
</dbReference>
<dbReference type="InterPro" id="IPR050213">
    <property type="entry name" value="GST_superfamily"/>
</dbReference>
<dbReference type="InterPro" id="IPR036249">
    <property type="entry name" value="Thioredoxin-like_sf"/>
</dbReference>
<dbReference type="PANTHER" id="PTHR11571">
    <property type="entry name" value="GLUTATHIONE S-TRANSFERASE"/>
    <property type="match status" value="1"/>
</dbReference>
<dbReference type="PANTHER" id="PTHR11571:SF133">
    <property type="entry name" value="GLUTATHIONE S-TRANSFERASE MU 3"/>
    <property type="match status" value="1"/>
</dbReference>
<dbReference type="Pfam" id="PF00043">
    <property type="entry name" value="GST_C"/>
    <property type="match status" value="1"/>
</dbReference>
<dbReference type="Pfam" id="PF02798">
    <property type="entry name" value="GST_N"/>
    <property type="match status" value="1"/>
</dbReference>
<dbReference type="PRINTS" id="PR01267">
    <property type="entry name" value="GSTRNSFRASEM"/>
</dbReference>
<dbReference type="SFLD" id="SFLDG01205">
    <property type="entry name" value="AMPS.1"/>
    <property type="match status" value="1"/>
</dbReference>
<dbReference type="SFLD" id="SFLDS00019">
    <property type="entry name" value="Glutathione_Transferase_(cytos"/>
    <property type="match status" value="1"/>
</dbReference>
<dbReference type="SUPFAM" id="SSF47616">
    <property type="entry name" value="GST C-terminal domain-like"/>
    <property type="match status" value="1"/>
</dbReference>
<dbReference type="SUPFAM" id="SSF52833">
    <property type="entry name" value="Thioredoxin-like"/>
    <property type="match status" value="1"/>
</dbReference>
<dbReference type="PROSITE" id="PS50405">
    <property type="entry name" value="GST_CTER"/>
    <property type="match status" value="1"/>
</dbReference>
<dbReference type="PROSITE" id="PS50404">
    <property type="entry name" value="GST_NTER"/>
    <property type="match status" value="1"/>
</dbReference>
<comment type="function">
    <text>Conjugation of reduced glutathione to a wide number of exogenous and endogenous hydrophobic electrophiles.</text>
</comment>
<comment type="catalytic activity">
    <reaction>
        <text>RX + glutathione = an S-substituted glutathione + a halide anion + H(+)</text>
        <dbReference type="Rhea" id="RHEA:16437"/>
        <dbReference type="ChEBI" id="CHEBI:15378"/>
        <dbReference type="ChEBI" id="CHEBI:16042"/>
        <dbReference type="ChEBI" id="CHEBI:17792"/>
        <dbReference type="ChEBI" id="CHEBI:57925"/>
        <dbReference type="ChEBI" id="CHEBI:90779"/>
        <dbReference type="EC" id="2.5.1.18"/>
    </reaction>
</comment>
<comment type="biophysicochemical properties">
    <kinetics>
        <KM evidence="3">0.14 mM for glutathione</KM>
    </kinetics>
</comment>
<comment type="subunit">
    <text evidence="1">Homodimer.</text>
</comment>
<comment type="subcellular location">
    <subcellularLocation>
        <location evidence="3">Cytoplasm</location>
    </subcellularLocation>
</comment>
<comment type="tissue specificity">
    <text evidence="3">Expressed in testis and brain. Very low expression in liver, kidney, heart and lung.</text>
</comment>
<comment type="PTM">
    <text evidence="4">The N-terminus is blocked.</text>
</comment>
<comment type="similarity">
    <text evidence="4">Belongs to the GST superfamily. Mu family.</text>
</comment>
<proteinExistence type="evidence at protein level"/>
<reference key="1">
    <citation type="journal article" date="1998" name="J. Biol. Chem.">
        <title>Rationale for reclassification of a distinctive subdivision of mammalian class Mu glutathione S-transferases that are primarily expressed in testis.</title>
        <authorList>
            <person name="Rowe J.D."/>
            <person name="Patskovsky Y.V."/>
            <person name="Patskovska L.N."/>
            <person name="Novikova E."/>
            <person name="Listowsky I."/>
        </authorList>
    </citation>
    <scope>NUCLEOTIDE SEQUENCE [MRNA]</scope>
    <scope>PROTEIN SEQUENCE OF 6-27; 36-50; 57-71; 74-87; 89-120; 157-177; 179-186; 198-215 AND 219-224</scope>
    <scope>TISSUE SPECIFICITY</scope>
    <scope>SUBCELLULAR LOCATION</scope>
    <scope>KINETIC PARAMETERS</scope>
    <source>
        <strain>Sprague-Dawley</strain>
        <tissue>Testis</tissue>
    </source>
</reference>
<reference key="2">
    <citation type="submission" date="2006-11" db="UniProtKB">
        <authorList>
            <person name="Lubec G."/>
            <person name="Afjehi-Sadat L."/>
        </authorList>
    </citation>
    <scope>PROTEIN SEQUENCE OF 157-172</scope>
    <scope>INITIATOR METHIONINE</scope>
    <scope>IDENTIFICATION BY MASS SPECTROMETRY</scope>
    <source>
        <strain>Sprague-Dawley</strain>
        <tissue>Spinal cord</tissue>
    </source>
</reference>
<reference key="3">
    <citation type="journal article" date="2012" name="Nat. Commun.">
        <title>Quantitative maps of protein phosphorylation sites across 14 different rat organs and tissues.</title>
        <authorList>
            <person name="Lundby A."/>
            <person name="Secher A."/>
            <person name="Lage K."/>
            <person name="Nordsborg N.B."/>
            <person name="Dmytriyev A."/>
            <person name="Lundby C."/>
            <person name="Olsen J.V."/>
        </authorList>
    </citation>
    <scope>PHOSPHORYLATION [LARGE SCALE ANALYSIS] AT SER-6</scope>
    <scope>IDENTIFICATION BY MASS SPECTROMETRY [LARGE SCALE ANALYSIS]</scope>
</reference>
<feature type="chain" id="PRO_0000271421" description="Glutathione S-transferase Mu 5">
    <location>
        <begin position="1"/>
        <end position="225"/>
    </location>
</feature>
<feature type="domain" description="GST N-terminal">
    <location>
        <begin position="5"/>
        <end position="92"/>
    </location>
</feature>
<feature type="domain" description="GST C-terminal">
    <location>
        <begin position="94"/>
        <end position="212"/>
    </location>
</feature>
<feature type="binding site" evidence="2">
    <location>
        <begin position="11"/>
        <end position="12"/>
    </location>
    <ligand>
        <name>glutathione</name>
        <dbReference type="ChEBI" id="CHEBI:57925"/>
    </ligand>
</feature>
<feature type="binding site" evidence="2">
    <location>
        <begin position="50"/>
        <end position="54"/>
    </location>
    <ligand>
        <name>glutathione</name>
        <dbReference type="ChEBI" id="CHEBI:57925"/>
    </ligand>
</feature>
<feature type="binding site" evidence="2">
    <location>
        <begin position="63"/>
        <end position="64"/>
    </location>
    <ligand>
        <name>glutathione</name>
        <dbReference type="ChEBI" id="CHEBI:57925"/>
    </ligand>
</feature>
<feature type="binding site" evidence="2">
    <location>
        <begin position="76"/>
        <end position="77"/>
    </location>
    <ligand>
        <name>glutathione</name>
        <dbReference type="ChEBI" id="CHEBI:57925"/>
    </ligand>
</feature>
<feature type="binding site" evidence="1">
    <location>
        <position position="120"/>
    </location>
    <ligand>
        <name>substrate</name>
    </ligand>
</feature>
<feature type="modified residue" description="Phosphoserine" evidence="5">
    <location>
        <position position="6"/>
    </location>
</feature>
<accession>Q9Z1B2</accession>